<organism>
    <name type="scientific">Aquifex aeolicus (strain VF5)</name>
    <dbReference type="NCBI Taxonomy" id="224324"/>
    <lineage>
        <taxon>Bacteria</taxon>
        <taxon>Pseudomonadati</taxon>
        <taxon>Aquificota</taxon>
        <taxon>Aquificia</taxon>
        <taxon>Aquificales</taxon>
        <taxon>Aquificaceae</taxon>
        <taxon>Aquifex</taxon>
    </lineage>
</organism>
<dbReference type="EMBL" id="AE000657">
    <property type="protein sequence ID" value="AAC07491.1"/>
    <property type="molecule type" value="Genomic_DNA"/>
</dbReference>
<dbReference type="PIR" id="C70436">
    <property type="entry name" value="C70436"/>
</dbReference>
<dbReference type="RefSeq" id="NP_214082.1">
    <property type="nucleotide sequence ID" value="NC_000918.1"/>
</dbReference>
<dbReference type="RefSeq" id="WP_010881020.1">
    <property type="nucleotide sequence ID" value="NC_000918.1"/>
</dbReference>
<dbReference type="PDB" id="1LFP">
    <property type="method" value="X-ray"/>
    <property type="resolution" value="1.72 A"/>
    <property type="chains" value="A=1-249"/>
</dbReference>
<dbReference type="PDBsum" id="1LFP"/>
<dbReference type="SMR" id="O67517"/>
<dbReference type="FunCoup" id="O67517">
    <property type="interactions" value="441"/>
</dbReference>
<dbReference type="STRING" id="224324.aq_1575"/>
<dbReference type="EnsemblBacteria" id="AAC07491">
    <property type="protein sequence ID" value="AAC07491"/>
    <property type="gene ID" value="aq_1575"/>
</dbReference>
<dbReference type="KEGG" id="aae:aq_1575"/>
<dbReference type="PATRIC" id="fig|224324.8.peg.1216"/>
<dbReference type="eggNOG" id="COG0217">
    <property type="taxonomic scope" value="Bacteria"/>
</dbReference>
<dbReference type="HOGENOM" id="CLU_062974_2_2_0"/>
<dbReference type="InParanoid" id="O67517"/>
<dbReference type="OrthoDB" id="9781053at2"/>
<dbReference type="EvolutionaryTrace" id="O67517"/>
<dbReference type="Proteomes" id="UP000000798">
    <property type="component" value="Chromosome"/>
</dbReference>
<dbReference type="GO" id="GO:0005829">
    <property type="term" value="C:cytosol"/>
    <property type="evidence" value="ECO:0000318"/>
    <property type="project" value="GO_Central"/>
</dbReference>
<dbReference type="GO" id="GO:0003677">
    <property type="term" value="F:DNA binding"/>
    <property type="evidence" value="ECO:0007669"/>
    <property type="project" value="UniProtKB-UniRule"/>
</dbReference>
<dbReference type="GO" id="GO:0006355">
    <property type="term" value="P:regulation of DNA-templated transcription"/>
    <property type="evidence" value="ECO:0007669"/>
    <property type="project" value="UniProtKB-UniRule"/>
</dbReference>
<dbReference type="FunFam" id="1.10.10.200:FF:000002">
    <property type="entry name" value="Probable transcriptional regulatory protein CLM62_37755"/>
    <property type="match status" value="1"/>
</dbReference>
<dbReference type="FunFam" id="3.30.70.980:FF:000002">
    <property type="entry name" value="Probable transcriptional regulatory protein YebC"/>
    <property type="match status" value="1"/>
</dbReference>
<dbReference type="Gene3D" id="1.10.10.200">
    <property type="match status" value="1"/>
</dbReference>
<dbReference type="Gene3D" id="3.30.70.980">
    <property type="match status" value="2"/>
</dbReference>
<dbReference type="HAMAP" id="MF_00693">
    <property type="entry name" value="Transcrip_reg_TACO1"/>
    <property type="match status" value="1"/>
</dbReference>
<dbReference type="InterPro" id="IPR017856">
    <property type="entry name" value="Integrase-like_N"/>
</dbReference>
<dbReference type="InterPro" id="IPR048300">
    <property type="entry name" value="TACO1_YebC-like_2nd/3rd_dom"/>
</dbReference>
<dbReference type="InterPro" id="IPR049083">
    <property type="entry name" value="TACO1_YebC_N"/>
</dbReference>
<dbReference type="InterPro" id="IPR002876">
    <property type="entry name" value="Transcrip_reg_TACO1-like"/>
</dbReference>
<dbReference type="InterPro" id="IPR026564">
    <property type="entry name" value="Transcrip_reg_TACO1-like_dom3"/>
</dbReference>
<dbReference type="InterPro" id="IPR029072">
    <property type="entry name" value="YebC-like"/>
</dbReference>
<dbReference type="NCBIfam" id="NF001030">
    <property type="entry name" value="PRK00110.1"/>
    <property type="match status" value="1"/>
</dbReference>
<dbReference type="NCBIfam" id="NF009044">
    <property type="entry name" value="PRK12378.1"/>
    <property type="match status" value="1"/>
</dbReference>
<dbReference type="NCBIfam" id="TIGR01033">
    <property type="entry name" value="YebC/PmpR family DNA-binding transcriptional regulator"/>
    <property type="match status" value="1"/>
</dbReference>
<dbReference type="PANTHER" id="PTHR12532:SF6">
    <property type="entry name" value="TRANSCRIPTIONAL REGULATORY PROTEIN YEBC-RELATED"/>
    <property type="match status" value="1"/>
</dbReference>
<dbReference type="PANTHER" id="PTHR12532">
    <property type="entry name" value="TRANSLATIONAL ACTIVATOR OF CYTOCHROME C OXIDASE 1"/>
    <property type="match status" value="1"/>
</dbReference>
<dbReference type="Pfam" id="PF20772">
    <property type="entry name" value="TACO1_YebC_N"/>
    <property type="match status" value="1"/>
</dbReference>
<dbReference type="Pfam" id="PF01709">
    <property type="entry name" value="Transcrip_reg"/>
    <property type="match status" value="1"/>
</dbReference>
<dbReference type="SUPFAM" id="SSF75625">
    <property type="entry name" value="YebC-like"/>
    <property type="match status" value="1"/>
</dbReference>
<protein>
    <recommendedName>
        <fullName evidence="1">Probable transcriptional regulatory protein aq_1575</fullName>
    </recommendedName>
</protein>
<reference key="1">
    <citation type="journal article" date="1998" name="Nature">
        <title>The complete genome of the hyperthermophilic bacterium Aquifex aeolicus.</title>
        <authorList>
            <person name="Deckert G."/>
            <person name="Warren P.V."/>
            <person name="Gaasterland T."/>
            <person name="Young W.G."/>
            <person name="Lenox A.L."/>
            <person name="Graham D.E."/>
            <person name="Overbeek R."/>
            <person name="Snead M.A."/>
            <person name="Keller M."/>
            <person name="Aujay M."/>
            <person name="Huber R."/>
            <person name="Feldman R.A."/>
            <person name="Short J.M."/>
            <person name="Olsen G.J."/>
            <person name="Swanson R.V."/>
        </authorList>
    </citation>
    <scope>NUCLEOTIDE SEQUENCE [LARGE SCALE GENOMIC DNA]</scope>
    <source>
        <strain>VF5</strain>
    </source>
</reference>
<reference key="2">
    <citation type="journal article" date="2002" name="Proc. Natl. Acad. Sci. U.S.A.">
        <title>Crystal structure of conserved hypothetical protein Aq1575 from Aquifex aeolicus.</title>
        <authorList>
            <person name="Shin D.H."/>
            <person name="Yokota H."/>
            <person name="Kim R."/>
            <person name="Kim S.H."/>
        </authorList>
    </citation>
    <scope>X-RAY CRYSTALLOGRAPHY (1.72 ANGSTROMS)</scope>
</reference>
<accession>O67517</accession>
<feature type="chain" id="PRO_0000175750" description="Probable transcriptional regulatory protein aq_1575">
    <location>
        <begin position="1"/>
        <end position="249"/>
    </location>
</feature>
<feature type="strand" evidence="2">
    <location>
        <begin position="10"/>
        <end position="15"/>
    </location>
</feature>
<feature type="turn" evidence="2">
    <location>
        <begin position="17"/>
        <end position="19"/>
    </location>
</feature>
<feature type="helix" evidence="2">
    <location>
        <begin position="21"/>
        <end position="39"/>
    </location>
</feature>
<feature type="helix" evidence="2">
    <location>
        <begin position="43"/>
        <end position="45"/>
    </location>
</feature>
<feature type="helix" evidence="2">
    <location>
        <begin position="47"/>
        <end position="58"/>
    </location>
</feature>
<feature type="helix" evidence="2">
    <location>
        <begin position="63"/>
        <end position="74"/>
    </location>
</feature>
<feature type="strand" evidence="2">
    <location>
        <begin position="77"/>
        <end position="79"/>
    </location>
</feature>
<feature type="strand" evidence="2">
    <location>
        <begin position="83"/>
        <end position="91"/>
    </location>
</feature>
<feature type="turn" evidence="2">
    <location>
        <begin position="92"/>
        <end position="94"/>
    </location>
</feature>
<feature type="strand" evidence="2">
    <location>
        <begin position="95"/>
        <end position="104"/>
    </location>
</feature>
<feature type="helix" evidence="2">
    <location>
        <begin position="106"/>
        <end position="119"/>
    </location>
</feature>
<feature type="helix" evidence="2">
    <location>
        <begin position="131"/>
        <end position="133"/>
    </location>
</feature>
<feature type="strand" evidence="2">
    <location>
        <begin position="134"/>
        <end position="143"/>
    </location>
</feature>
<feature type="helix" evidence="2">
    <location>
        <begin position="144"/>
        <end position="146"/>
    </location>
</feature>
<feature type="helix" evidence="2">
    <location>
        <begin position="149"/>
        <end position="159"/>
    </location>
</feature>
<feature type="strand" evidence="2">
    <location>
        <begin position="162"/>
        <end position="165"/>
    </location>
</feature>
<feature type="strand" evidence="2">
    <location>
        <begin position="168"/>
        <end position="175"/>
    </location>
</feature>
<feature type="helix" evidence="2">
    <location>
        <begin position="177"/>
        <end position="179"/>
    </location>
</feature>
<feature type="helix" evidence="2">
    <location>
        <begin position="180"/>
        <end position="188"/>
    </location>
</feature>
<feature type="turn" evidence="2">
    <location>
        <begin position="189"/>
        <end position="191"/>
    </location>
</feature>
<feature type="strand" evidence="2">
    <location>
        <begin position="195"/>
        <end position="205"/>
    </location>
</feature>
<feature type="helix" evidence="2">
    <location>
        <begin position="212"/>
        <end position="226"/>
    </location>
</feature>
<feature type="strand" evidence="2">
    <location>
        <begin position="231"/>
        <end position="236"/>
    </location>
</feature>
<name>Y1575_AQUAE</name>
<comment type="subcellular location">
    <subcellularLocation>
        <location evidence="1">Cytoplasm</location>
    </subcellularLocation>
</comment>
<comment type="similarity">
    <text evidence="1">Belongs to the TACO1 family.</text>
</comment>
<sequence>MAGHSHWAQIKHKKAKVDAQRGKLFSKLIREIIVATRLGGPNPEFNPRLRTAIEQAKKANMPWENIERAIKKGAGELEGEQFEEVIYEGYAPGGVAVMVLATTDNRNRTTSEVRHVFTKHGGNLGASGCVSYLFERKGYIEVPAKEVSEEELLEKAIEVGAEDVQPGEEVHIIYTVPEELYEVKENLEKLGVPIEKAQITWKPISTVQINDEETAQKVIKLLNALEELDDVQQVIANFEIPEEILQKVG</sequence>
<evidence type="ECO:0000255" key="1">
    <source>
        <dbReference type="HAMAP-Rule" id="MF_00693"/>
    </source>
</evidence>
<evidence type="ECO:0007829" key="2">
    <source>
        <dbReference type="PDB" id="1LFP"/>
    </source>
</evidence>
<proteinExistence type="evidence at protein level"/>
<keyword id="KW-0002">3D-structure</keyword>
<keyword id="KW-0963">Cytoplasm</keyword>
<keyword id="KW-0238">DNA-binding</keyword>
<keyword id="KW-1185">Reference proteome</keyword>
<keyword id="KW-0804">Transcription</keyword>
<keyword id="KW-0805">Transcription regulation</keyword>
<gene>
    <name type="ordered locus">aq_1575</name>
</gene>